<gene>
    <name evidence="1" type="primary">addA</name>
    <name type="ordered locus">BCG9842_B4148</name>
</gene>
<accession>B7IL84</accession>
<sequence>MIENWPKKPEGSQWTDDQWKAVVANGRDILVAAAAGSGKTAVLVERIIKKIINEENPVDVDRLLVVTFTNAAAQEMKNRIGEALEKVLIDEPGSQHVRKQLSLLNKASISTIHSFCLQVIRGYYYMLDVDPRFRIANQTENELLKEEVLDDILEEEYGIEDNTIFFELVDRYTSDRSDDDLQRMILALHTESRAHPNPEKWLDKLVEAYDVEGKTIEDLVYASYLLEDVKFQLETAEQHIRKATELAMLPDGPAPRVETLQADVALLGTLSSAARESWTSVYEAMQNVSWQTLKRIKKSDYNEDVVKQVDSLRNKAKDEVKKLQEELFSRKPESFLRDFQDMHPVLEKLVQLVKVFTERFQAMKRDKGMVDFTDLEHFCLQILSEQSENGEMNPSAVAFQYRNKFTEVLVDEYQDTNFVQESIIKFVTKDSESEGNLFMVGDVKQSIYRFRLAEPGLFLGKYKRFTQEGLGGGMKIDLAKNFRSRHEVLAGTNFIFKQIMGEEVGEIDYDADAELKLGATYPEGEDVAAELLCIQQTEEEVIDGEEGAEVEKAQLEARLMAQRIKAMVDSGYEVYDRKTDSMRPVQYRDFVILLRSMPWAPQIMEELKLQGIPVYADLATGYFEATEVNIMMNVFRVIDNPMQDIPLAAVLRSPIVGLNDEDLATLRAHGKKGSFYEVMSSFLKGAPLEEEQELHEKLEWFYNLLQGWREFARQQSLSDLIWKVYGETGYYDFVGGLPAGKQRQANLRVLYDRARQYEATSFRGLFRFLRFIERILERGDDMGTARALGEQEDVVRIMTIHKSKGLEFPVVFVAGLGRRFNTQDLMKRFLLHKDFGFGSQFIDPRKRIKYTTLSQLAIKRKMKMELIAEEMRVLYVALTRAKEKLILIGTVKDANKEMEKWLDAREHSEWLLPDHIRAGASCYLDWIAPSLYRHRDSEMLLELGQGSIPDEIYGYDTNWKVEVVDGNTLLAPEPVQEEKQELLEALREKKAVPLQSERKEEVYDRLMWKYGYEDATSYRAKQSVTEIKRNYQSEEGSDNAFIKKLRTPIKTRPRFMEKKGLTYAERGTAVHAVMQHVDLKKPITVEVLQEQIAGMVNKELLTFEQAEEIAIEKVISFFDSDLGKRVLAAKSVEREVPFTMMLAAEEAYQDWQGKSEETILVQGVIDCMIEEEDGITLIDFKTDTIEGKFPGGFEQAKPILEDRYKVQLSLYAKALEKSLQHPVKEKCLYFFDGNHVVNIEE</sequence>
<keyword id="KW-0067">ATP-binding</keyword>
<keyword id="KW-0227">DNA damage</keyword>
<keyword id="KW-0234">DNA repair</keyword>
<keyword id="KW-0238">DNA-binding</keyword>
<keyword id="KW-0269">Exonuclease</keyword>
<keyword id="KW-0347">Helicase</keyword>
<keyword id="KW-0378">Hydrolase</keyword>
<keyword id="KW-0413">Isomerase</keyword>
<keyword id="KW-0540">Nuclease</keyword>
<keyword id="KW-0547">Nucleotide-binding</keyword>
<reference key="1">
    <citation type="submission" date="2008-10" db="EMBL/GenBank/DDBJ databases">
        <title>Genome sequence of Bacillus cereus G9842.</title>
        <authorList>
            <person name="Dodson R.J."/>
            <person name="Durkin A.S."/>
            <person name="Rosovitz M.J."/>
            <person name="Rasko D.A."/>
            <person name="Hoffmaster A."/>
            <person name="Ravel J."/>
            <person name="Sutton G."/>
        </authorList>
    </citation>
    <scope>NUCLEOTIDE SEQUENCE [LARGE SCALE GENOMIC DNA]</scope>
    <source>
        <strain>G9842</strain>
    </source>
</reference>
<proteinExistence type="inferred from homology"/>
<feature type="chain" id="PRO_0000379237" description="ATP-dependent helicase/nuclease subunit A">
    <location>
        <begin position="1"/>
        <end position="1241"/>
    </location>
</feature>
<feature type="domain" description="UvrD-like helicase ATP-binding" evidence="1">
    <location>
        <begin position="12"/>
        <end position="485"/>
    </location>
</feature>
<feature type="domain" description="UvrD-like helicase C-terminal" evidence="1">
    <location>
        <begin position="505"/>
        <end position="805"/>
    </location>
</feature>
<feature type="binding site" evidence="1">
    <location>
        <begin position="33"/>
        <end position="40"/>
    </location>
    <ligand>
        <name>ATP</name>
        <dbReference type="ChEBI" id="CHEBI:30616"/>
    </ligand>
</feature>
<dbReference type="EC" id="3.1.-.-" evidence="1"/>
<dbReference type="EC" id="5.6.2.4" evidence="1"/>
<dbReference type="EMBL" id="CP001186">
    <property type="protein sequence ID" value="ACK96545.1"/>
    <property type="molecule type" value="Genomic_DNA"/>
</dbReference>
<dbReference type="RefSeq" id="WP_000572302.1">
    <property type="nucleotide sequence ID" value="NC_011772.1"/>
</dbReference>
<dbReference type="SMR" id="B7IL84"/>
<dbReference type="KEGG" id="bcg:BCG9842_B4148"/>
<dbReference type="HOGENOM" id="CLU_001114_3_1_9"/>
<dbReference type="Proteomes" id="UP000006744">
    <property type="component" value="Chromosome"/>
</dbReference>
<dbReference type="GO" id="GO:0005829">
    <property type="term" value="C:cytosol"/>
    <property type="evidence" value="ECO:0007669"/>
    <property type="project" value="TreeGrafter"/>
</dbReference>
<dbReference type="GO" id="GO:0033202">
    <property type="term" value="C:DNA helicase complex"/>
    <property type="evidence" value="ECO:0007669"/>
    <property type="project" value="TreeGrafter"/>
</dbReference>
<dbReference type="GO" id="GO:0043138">
    <property type="term" value="F:3'-5' DNA helicase activity"/>
    <property type="evidence" value="ECO:0007669"/>
    <property type="project" value="UniProtKB-UniRule"/>
</dbReference>
<dbReference type="GO" id="GO:0008408">
    <property type="term" value="F:3'-5' exonuclease activity"/>
    <property type="evidence" value="ECO:0007669"/>
    <property type="project" value="UniProtKB-UniRule"/>
</dbReference>
<dbReference type="GO" id="GO:0005524">
    <property type="term" value="F:ATP binding"/>
    <property type="evidence" value="ECO:0007669"/>
    <property type="project" value="UniProtKB-UniRule"/>
</dbReference>
<dbReference type="GO" id="GO:0016887">
    <property type="term" value="F:ATP hydrolysis activity"/>
    <property type="evidence" value="ECO:0007669"/>
    <property type="project" value="RHEA"/>
</dbReference>
<dbReference type="GO" id="GO:0003690">
    <property type="term" value="F:double-stranded DNA binding"/>
    <property type="evidence" value="ECO:0007669"/>
    <property type="project" value="UniProtKB-UniRule"/>
</dbReference>
<dbReference type="GO" id="GO:0000724">
    <property type="term" value="P:double-strand break repair via homologous recombination"/>
    <property type="evidence" value="ECO:0007669"/>
    <property type="project" value="UniProtKB-UniRule"/>
</dbReference>
<dbReference type="CDD" id="cd17932">
    <property type="entry name" value="DEXQc_UvrD"/>
    <property type="match status" value="1"/>
</dbReference>
<dbReference type="CDD" id="cd18807">
    <property type="entry name" value="SF1_C_UvrD"/>
    <property type="match status" value="1"/>
</dbReference>
<dbReference type="FunFam" id="3.40.50.300:FF:001164">
    <property type="entry name" value="ATP-dependent helicase/nuclease subunit A"/>
    <property type="match status" value="1"/>
</dbReference>
<dbReference type="FunFam" id="3.40.50.300:FF:001187">
    <property type="entry name" value="ATP-dependent helicase/nuclease subunit A"/>
    <property type="match status" value="1"/>
</dbReference>
<dbReference type="FunFam" id="3.40.50.300:FF:001196">
    <property type="entry name" value="ATP-dependent helicase/nuclease subunit A"/>
    <property type="match status" value="1"/>
</dbReference>
<dbReference type="FunFam" id="3.40.50.300:FF:001236">
    <property type="entry name" value="ATP-dependent helicase/nuclease subunit A"/>
    <property type="match status" value="1"/>
</dbReference>
<dbReference type="FunFam" id="3.90.320.10:FF:000008">
    <property type="entry name" value="ATP-dependent helicase/nuclease subunit A"/>
    <property type="match status" value="1"/>
</dbReference>
<dbReference type="Gene3D" id="3.90.320.10">
    <property type="match status" value="1"/>
</dbReference>
<dbReference type="Gene3D" id="6.10.250.2380">
    <property type="match status" value="1"/>
</dbReference>
<dbReference type="Gene3D" id="3.40.50.300">
    <property type="entry name" value="P-loop containing nucleotide triphosphate hydrolases"/>
    <property type="match status" value="4"/>
</dbReference>
<dbReference type="HAMAP" id="MF_01451">
    <property type="entry name" value="AddA"/>
    <property type="match status" value="1"/>
</dbReference>
<dbReference type="InterPro" id="IPR014152">
    <property type="entry name" value="AddA"/>
</dbReference>
<dbReference type="InterPro" id="IPR014017">
    <property type="entry name" value="DNA_helicase_UvrD-like_C"/>
</dbReference>
<dbReference type="InterPro" id="IPR000212">
    <property type="entry name" value="DNA_helicase_UvrD/REP"/>
</dbReference>
<dbReference type="InterPro" id="IPR027417">
    <property type="entry name" value="P-loop_NTPase"/>
</dbReference>
<dbReference type="InterPro" id="IPR011604">
    <property type="entry name" value="PDDEXK-like_dom_sf"/>
</dbReference>
<dbReference type="InterPro" id="IPR038726">
    <property type="entry name" value="PDDEXK_AddAB-type"/>
</dbReference>
<dbReference type="InterPro" id="IPR011335">
    <property type="entry name" value="Restrct_endonuc-II-like"/>
</dbReference>
<dbReference type="InterPro" id="IPR014016">
    <property type="entry name" value="UvrD-like_ATP-bd"/>
</dbReference>
<dbReference type="NCBIfam" id="TIGR02785">
    <property type="entry name" value="addA_Gpos"/>
    <property type="match status" value="1"/>
</dbReference>
<dbReference type="PANTHER" id="PTHR11070:SF48">
    <property type="entry name" value="ATP-DEPENDENT HELICASE_NUCLEASE SUBUNIT A"/>
    <property type="match status" value="1"/>
</dbReference>
<dbReference type="PANTHER" id="PTHR11070">
    <property type="entry name" value="UVRD / RECB / PCRA DNA HELICASE FAMILY MEMBER"/>
    <property type="match status" value="1"/>
</dbReference>
<dbReference type="Pfam" id="PF12705">
    <property type="entry name" value="PDDEXK_1"/>
    <property type="match status" value="1"/>
</dbReference>
<dbReference type="Pfam" id="PF00580">
    <property type="entry name" value="UvrD-helicase"/>
    <property type="match status" value="1"/>
</dbReference>
<dbReference type="Pfam" id="PF13361">
    <property type="entry name" value="UvrD_C"/>
    <property type="match status" value="1"/>
</dbReference>
<dbReference type="SUPFAM" id="SSF52540">
    <property type="entry name" value="P-loop containing nucleoside triphosphate hydrolases"/>
    <property type="match status" value="1"/>
</dbReference>
<dbReference type="SUPFAM" id="SSF52980">
    <property type="entry name" value="Restriction endonuclease-like"/>
    <property type="match status" value="1"/>
</dbReference>
<dbReference type="PROSITE" id="PS51198">
    <property type="entry name" value="UVRD_HELICASE_ATP_BIND"/>
    <property type="match status" value="1"/>
</dbReference>
<dbReference type="PROSITE" id="PS51217">
    <property type="entry name" value="UVRD_HELICASE_CTER"/>
    <property type="match status" value="1"/>
</dbReference>
<name>ADDA_BACC2</name>
<comment type="function">
    <text evidence="1">The heterodimer acts as both an ATP-dependent DNA helicase and an ATP-dependent, dual-direction single-stranded exonuclease. Recognizes the chi site generating a DNA molecule suitable for the initiation of homologous recombination. The AddA nuclease domain is required for chi fragment generation; this subunit has the helicase and 3' -&gt; 5' nuclease activities.</text>
</comment>
<comment type="catalytic activity">
    <reaction evidence="1">
        <text>Couples ATP hydrolysis with the unwinding of duplex DNA by translocating in the 3'-5' direction.</text>
        <dbReference type="EC" id="5.6.2.4"/>
    </reaction>
</comment>
<comment type="catalytic activity">
    <reaction evidence="1">
        <text>ATP + H2O = ADP + phosphate + H(+)</text>
        <dbReference type="Rhea" id="RHEA:13065"/>
        <dbReference type="ChEBI" id="CHEBI:15377"/>
        <dbReference type="ChEBI" id="CHEBI:15378"/>
        <dbReference type="ChEBI" id="CHEBI:30616"/>
        <dbReference type="ChEBI" id="CHEBI:43474"/>
        <dbReference type="ChEBI" id="CHEBI:456216"/>
        <dbReference type="EC" id="5.6.2.4"/>
    </reaction>
</comment>
<comment type="cofactor">
    <cofactor evidence="1">
        <name>Mg(2+)</name>
        <dbReference type="ChEBI" id="CHEBI:18420"/>
    </cofactor>
</comment>
<comment type="subunit">
    <text evidence="1">Heterodimer of AddA and AddB/RexB.</text>
</comment>
<comment type="similarity">
    <text evidence="1">Belongs to the helicase family. AddA subfamily.</text>
</comment>
<evidence type="ECO:0000255" key="1">
    <source>
        <dbReference type="HAMAP-Rule" id="MF_01451"/>
    </source>
</evidence>
<organism>
    <name type="scientific">Bacillus cereus (strain G9842)</name>
    <dbReference type="NCBI Taxonomy" id="405531"/>
    <lineage>
        <taxon>Bacteria</taxon>
        <taxon>Bacillati</taxon>
        <taxon>Bacillota</taxon>
        <taxon>Bacilli</taxon>
        <taxon>Bacillales</taxon>
        <taxon>Bacillaceae</taxon>
        <taxon>Bacillus</taxon>
        <taxon>Bacillus cereus group</taxon>
    </lineage>
</organism>
<protein>
    <recommendedName>
        <fullName evidence="1">ATP-dependent helicase/nuclease subunit A</fullName>
        <ecNumber evidence="1">3.1.-.-</ecNumber>
        <ecNumber evidence="1">5.6.2.4</ecNumber>
    </recommendedName>
    <alternativeName>
        <fullName evidence="1">ATP-dependent helicase/nuclease AddA</fullName>
    </alternativeName>
    <alternativeName>
        <fullName evidence="1">DNA 3'-5' helicase AddA</fullName>
    </alternativeName>
</protein>